<reference key="1">
    <citation type="journal article" date="2003" name="Appl. Microbiol. Biotechnol.">
        <title>The Corynebacterium glutamicum genome: features and impacts on biotechnological processes.</title>
        <authorList>
            <person name="Ikeda M."/>
            <person name="Nakagawa S."/>
        </authorList>
    </citation>
    <scope>NUCLEOTIDE SEQUENCE [LARGE SCALE GENOMIC DNA]</scope>
    <source>
        <strain>ATCC 13032 / DSM 20300 / JCM 1318 / BCRC 11384 / CCUG 27702 / LMG 3730 / NBRC 12168 / NCIMB 10025 / NRRL B-2784 / 534</strain>
    </source>
</reference>
<reference key="2">
    <citation type="journal article" date="2003" name="J. Biotechnol.">
        <title>The complete Corynebacterium glutamicum ATCC 13032 genome sequence and its impact on the production of L-aspartate-derived amino acids and vitamins.</title>
        <authorList>
            <person name="Kalinowski J."/>
            <person name="Bathe B."/>
            <person name="Bartels D."/>
            <person name="Bischoff N."/>
            <person name="Bott M."/>
            <person name="Burkovski A."/>
            <person name="Dusch N."/>
            <person name="Eggeling L."/>
            <person name="Eikmanns B.J."/>
            <person name="Gaigalat L."/>
            <person name="Goesmann A."/>
            <person name="Hartmann M."/>
            <person name="Huthmacher K."/>
            <person name="Kraemer R."/>
            <person name="Linke B."/>
            <person name="McHardy A.C."/>
            <person name="Meyer F."/>
            <person name="Moeckel B."/>
            <person name="Pfefferle W."/>
            <person name="Puehler A."/>
            <person name="Rey D.A."/>
            <person name="Rueckert C."/>
            <person name="Rupp O."/>
            <person name="Sahm H."/>
            <person name="Wendisch V.F."/>
            <person name="Wiegraebe I."/>
            <person name="Tauch A."/>
        </authorList>
    </citation>
    <scope>NUCLEOTIDE SEQUENCE [LARGE SCALE GENOMIC DNA]</scope>
    <source>
        <strain>ATCC 13032 / DSM 20300 / JCM 1318 / BCRC 11384 / CCUG 27702 / LMG 3730 / NBRC 12168 / NCIMB 10025 / NRRL B-2784 / 534</strain>
    </source>
</reference>
<comment type="catalytic activity">
    <reaction>
        <text>L-glutamine + H2O = L-glutamate + NH4(+)</text>
        <dbReference type="Rhea" id="RHEA:15889"/>
        <dbReference type="ChEBI" id="CHEBI:15377"/>
        <dbReference type="ChEBI" id="CHEBI:28938"/>
        <dbReference type="ChEBI" id="CHEBI:29985"/>
        <dbReference type="ChEBI" id="CHEBI:58359"/>
        <dbReference type="EC" id="3.5.1.2"/>
    </reaction>
</comment>
<comment type="subunit">
    <text evidence="1">Homotetramer.</text>
</comment>
<comment type="similarity">
    <text evidence="2">Belongs to the glutaminase family.</text>
</comment>
<comment type="sequence caution" evidence="2">
    <conflict type="erroneous initiation">
        <sequence resource="EMBL-CDS" id="BAB99875"/>
    </conflict>
</comment>
<feature type="chain" id="PRO_0000110606" description="Glutaminase">
    <location>
        <begin position="1"/>
        <end position="413"/>
    </location>
</feature>
<feature type="domain" description="STAS">
    <location>
        <begin position="316"/>
        <end position="413"/>
    </location>
</feature>
<feature type="region of interest" description="Glutaminase">
    <location>
        <begin position="23"/>
        <end position="307"/>
    </location>
</feature>
<feature type="binding site" evidence="1">
    <location>
        <position position="65"/>
    </location>
    <ligand>
        <name>substrate</name>
    </ligand>
</feature>
<feature type="binding site" evidence="1">
    <location>
        <position position="114"/>
    </location>
    <ligand>
        <name>substrate</name>
    </ligand>
</feature>
<feature type="binding site" evidence="1">
    <location>
        <position position="160"/>
    </location>
    <ligand>
        <name>substrate</name>
    </ligand>
</feature>
<feature type="binding site" evidence="1">
    <location>
        <position position="167"/>
    </location>
    <ligand>
        <name>substrate</name>
    </ligand>
</feature>
<feature type="binding site" evidence="1">
    <location>
        <position position="191"/>
    </location>
    <ligand>
        <name>substrate</name>
    </ligand>
</feature>
<feature type="binding site" evidence="1">
    <location>
        <position position="243"/>
    </location>
    <ligand>
        <name>substrate</name>
    </ligand>
</feature>
<feature type="binding site" evidence="1">
    <location>
        <position position="261"/>
    </location>
    <ligand>
        <name>substrate</name>
    </ligand>
</feature>
<protein>
    <recommendedName>
        <fullName>Glutaminase</fullName>
        <ecNumber>3.5.1.2</ecNumber>
    </recommendedName>
</protein>
<accession>Q8NMT3</accession>
<keyword id="KW-0378">Hydrolase</keyword>
<keyword id="KW-1185">Reference proteome</keyword>
<evidence type="ECO:0000250" key="1"/>
<evidence type="ECO:0000305" key="2"/>
<name>GLSA_CORGL</name>
<organism>
    <name type="scientific">Corynebacterium glutamicum (strain ATCC 13032 / DSM 20300 / JCM 1318 / BCRC 11384 / CCUG 27702 / LMG 3730 / NBRC 12168 / NCIMB 10025 / NRRL B-2784 / 534)</name>
    <dbReference type="NCBI Taxonomy" id="196627"/>
    <lineage>
        <taxon>Bacteria</taxon>
        <taxon>Bacillati</taxon>
        <taxon>Actinomycetota</taxon>
        <taxon>Actinomycetes</taxon>
        <taxon>Mycobacteriales</taxon>
        <taxon>Corynebacteriaceae</taxon>
        <taxon>Corynebacterium</taxon>
    </lineage>
</organism>
<proteinExistence type="inferred from homology"/>
<sequence>MLTMPIPEYLHEILDDVRDTTSGELADYIPELKSADPNPLAVALCTVNGHIYSAGDDDIEFTMQSISKPFAYALALQECGFDEVSASVALEPSGEAFNELSLDGENRPMNPMINAGAIAINQLINGSDSTVEDRVEKIRHYFSELAGRELTIDRVLAESELAGADRNLSIAHMLRNYGVIEDEAHDAVLSYTLQCAIKVTTRDLAVMTATLAAGGTHPITGKKLLDARVCRLTLSVMASAGMYDEAGQWLSTVGIPAKSGVAGGLIGILPGQLGIATFSPRLNPKGNSVRGVKIFKQLSDDMGLHLMSTEQVSGHAVRSITRDGDTTFIQMQGAMNFSASESFLHAIVEHNFEGTEVVLDLTRVLSFHPVAIRMIKEGLKRIRDAGFEVFILDPDDVLPDFMFSDGTICKERV</sequence>
<gene>
    <name type="primary">glsA</name>
    <name type="ordered locus">Cgl2482</name>
    <name type="ordered locus">cg2728</name>
</gene>
<dbReference type="EC" id="3.5.1.2"/>
<dbReference type="EMBL" id="BA000036">
    <property type="protein sequence ID" value="BAB99875.1"/>
    <property type="status" value="ALT_INIT"/>
    <property type="molecule type" value="Genomic_DNA"/>
</dbReference>
<dbReference type="EMBL" id="BX927155">
    <property type="protein sequence ID" value="CAF21143.1"/>
    <property type="molecule type" value="Genomic_DNA"/>
</dbReference>
<dbReference type="RefSeq" id="NP_601682.1">
    <property type="nucleotide sequence ID" value="NC_003450.3"/>
</dbReference>
<dbReference type="RefSeq" id="WP_003860838.1">
    <property type="nucleotide sequence ID" value="NC_006958.1"/>
</dbReference>
<dbReference type="SMR" id="Q8NMT3"/>
<dbReference type="STRING" id="196627.cg2728"/>
<dbReference type="KEGG" id="cgb:cg2728"/>
<dbReference type="KEGG" id="cgl:Cgl2482"/>
<dbReference type="PATRIC" id="fig|196627.13.peg.2414"/>
<dbReference type="eggNOG" id="COG2066">
    <property type="taxonomic scope" value="Bacteria"/>
</dbReference>
<dbReference type="HOGENOM" id="CLU_027932_0_0_11"/>
<dbReference type="OrthoDB" id="9788822at2"/>
<dbReference type="BioCyc" id="CORYNE:G18NG-12085-MONOMER"/>
<dbReference type="Proteomes" id="UP000000582">
    <property type="component" value="Chromosome"/>
</dbReference>
<dbReference type="Proteomes" id="UP000001009">
    <property type="component" value="Chromosome"/>
</dbReference>
<dbReference type="GO" id="GO:0004359">
    <property type="term" value="F:glutaminase activity"/>
    <property type="evidence" value="ECO:0007669"/>
    <property type="project" value="UniProtKB-UniRule"/>
</dbReference>
<dbReference type="GO" id="GO:0006537">
    <property type="term" value="P:glutamate biosynthetic process"/>
    <property type="evidence" value="ECO:0007669"/>
    <property type="project" value="TreeGrafter"/>
</dbReference>
<dbReference type="GO" id="GO:0006543">
    <property type="term" value="P:glutamine catabolic process"/>
    <property type="evidence" value="ECO:0007669"/>
    <property type="project" value="TreeGrafter"/>
</dbReference>
<dbReference type="FunFam" id="3.40.710.10:FF:000005">
    <property type="entry name" value="Glutaminase"/>
    <property type="match status" value="1"/>
</dbReference>
<dbReference type="Gene3D" id="3.40.710.10">
    <property type="entry name" value="DD-peptidase/beta-lactamase superfamily"/>
    <property type="match status" value="1"/>
</dbReference>
<dbReference type="Gene3D" id="3.30.750.24">
    <property type="entry name" value="STAS domain"/>
    <property type="match status" value="2"/>
</dbReference>
<dbReference type="HAMAP" id="MF_00313">
    <property type="entry name" value="Glutaminase"/>
    <property type="match status" value="1"/>
</dbReference>
<dbReference type="InterPro" id="IPR012338">
    <property type="entry name" value="Beta-lactam/transpept-like"/>
</dbReference>
<dbReference type="InterPro" id="IPR015868">
    <property type="entry name" value="Glutaminase"/>
</dbReference>
<dbReference type="InterPro" id="IPR002645">
    <property type="entry name" value="STAS_dom"/>
</dbReference>
<dbReference type="InterPro" id="IPR036513">
    <property type="entry name" value="STAS_dom_sf"/>
</dbReference>
<dbReference type="NCBIfam" id="TIGR03814">
    <property type="entry name" value="Gln_ase"/>
    <property type="match status" value="1"/>
</dbReference>
<dbReference type="NCBIfam" id="NF002134">
    <property type="entry name" value="PRK00971.1-4"/>
    <property type="match status" value="1"/>
</dbReference>
<dbReference type="PANTHER" id="PTHR12544">
    <property type="entry name" value="GLUTAMINASE"/>
    <property type="match status" value="1"/>
</dbReference>
<dbReference type="PANTHER" id="PTHR12544:SF29">
    <property type="entry name" value="GLUTAMINASE"/>
    <property type="match status" value="1"/>
</dbReference>
<dbReference type="Pfam" id="PF04960">
    <property type="entry name" value="Glutaminase"/>
    <property type="match status" value="1"/>
</dbReference>
<dbReference type="Pfam" id="PF01740">
    <property type="entry name" value="STAS"/>
    <property type="match status" value="1"/>
</dbReference>
<dbReference type="SUPFAM" id="SSF56601">
    <property type="entry name" value="beta-lactamase/transpeptidase-like"/>
    <property type="match status" value="1"/>
</dbReference>
<dbReference type="SUPFAM" id="SSF52091">
    <property type="entry name" value="SpoIIaa-like"/>
    <property type="match status" value="1"/>
</dbReference>
<dbReference type="PROSITE" id="PS50801">
    <property type="entry name" value="STAS"/>
    <property type="match status" value="1"/>
</dbReference>